<proteinExistence type="inferred from homology"/>
<organism>
    <name type="scientific">Halorhodospira halophila (strain DSM 244 / SL1)</name>
    <name type="common">Ectothiorhodospira halophila (strain DSM 244 / SL1)</name>
    <dbReference type="NCBI Taxonomy" id="349124"/>
    <lineage>
        <taxon>Bacteria</taxon>
        <taxon>Pseudomonadati</taxon>
        <taxon>Pseudomonadota</taxon>
        <taxon>Gammaproteobacteria</taxon>
        <taxon>Chromatiales</taxon>
        <taxon>Ectothiorhodospiraceae</taxon>
        <taxon>Halorhodospira</taxon>
    </lineage>
</organism>
<evidence type="ECO:0000255" key="1">
    <source>
        <dbReference type="HAMAP-Rule" id="MF_01440"/>
    </source>
</evidence>
<gene>
    <name evidence="1" type="primary">cheD</name>
    <name type="ordered locus">Hhal_2161</name>
</gene>
<reference key="1">
    <citation type="submission" date="2006-12" db="EMBL/GenBank/DDBJ databases">
        <title>Complete sequence of Halorhodospira halophila SL1.</title>
        <authorList>
            <consortium name="US DOE Joint Genome Institute"/>
            <person name="Copeland A."/>
            <person name="Lucas S."/>
            <person name="Lapidus A."/>
            <person name="Barry K."/>
            <person name="Detter J.C."/>
            <person name="Glavina del Rio T."/>
            <person name="Hammon N."/>
            <person name="Israni S."/>
            <person name="Dalin E."/>
            <person name="Tice H."/>
            <person name="Pitluck S."/>
            <person name="Saunders E."/>
            <person name="Brettin T."/>
            <person name="Bruce D."/>
            <person name="Han C."/>
            <person name="Tapia R."/>
            <person name="Schmutz J."/>
            <person name="Larimer F."/>
            <person name="Land M."/>
            <person name="Hauser L."/>
            <person name="Kyrpides N."/>
            <person name="Mikhailova N."/>
            <person name="Hoff W."/>
            <person name="Richardson P."/>
        </authorList>
    </citation>
    <scope>NUCLEOTIDE SEQUENCE [LARGE SCALE GENOMIC DNA]</scope>
    <source>
        <strain>DSM 244 / SL1</strain>
    </source>
</reference>
<sequence length="216" mass="24280">MQLGAFRNRGVTVPDCLPGFGHINRYWDPEHQVFAAKILPGEFYVTRGNEMIVTTLGSCVSACVRDRRLGVGGMNHFMLPVRGGDPNHWEGDPLSTATRYGNHAMEQLINRVLALGGQRQELEVKLFGGGRVLAGVTDVGKRNIEFAESYVRTEGLRLIGRDLGGQYPRKVQYFPESGRARSKKLLRTRNDTVVRREEHYLHEIDEQPVSGDVDLF</sequence>
<keyword id="KW-0145">Chemotaxis</keyword>
<keyword id="KW-0378">Hydrolase</keyword>
<keyword id="KW-1185">Reference proteome</keyword>
<feature type="chain" id="PRO_1000068550" description="Probable chemoreceptor glutamine deamidase CheD">
    <location>
        <begin position="1"/>
        <end position="216"/>
    </location>
</feature>
<name>CHED_HALHL</name>
<accession>A1WZ13</accession>
<comment type="function">
    <text evidence="1">Probably deamidates glutamine residues to glutamate on methyl-accepting chemotaxis receptors (MCPs), playing an important role in chemotaxis.</text>
</comment>
<comment type="catalytic activity">
    <reaction evidence="1">
        <text>L-glutaminyl-[protein] + H2O = L-glutamyl-[protein] + NH4(+)</text>
        <dbReference type="Rhea" id="RHEA:16441"/>
        <dbReference type="Rhea" id="RHEA-COMP:10207"/>
        <dbReference type="Rhea" id="RHEA-COMP:10208"/>
        <dbReference type="ChEBI" id="CHEBI:15377"/>
        <dbReference type="ChEBI" id="CHEBI:28938"/>
        <dbReference type="ChEBI" id="CHEBI:29973"/>
        <dbReference type="ChEBI" id="CHEBI:30011"/>
        <dbReference type="EC" id="3.5.1.44"/>
    </reaction>
</comment>
<comment type="similarity">
    <text evidence="1">Belongs to the CheD family.</text>
</comment>
<dbReference type="EC" id="3.5.1.44" evidence="1"/>
<dbReference type="EMBL" id="CP000544">
    <property type="protein sequence ID" value="ABM62925.1"/>
    <property type="molecule type" value="Genomic_DNA"/>
</dbReference>
<dbReference type="RefSeq" id="WP_011814947.1">
    <property type="nucleotide sequence ID" value="NC_008789.1"/>
</dbReference>
<dbReference type="SMR" id="A1WZ13"/>
<dbReference type="STRING" id="349124.Hhal_2161"/>
<dbReference type="KEGG" id="hha:Hhal_2161"/>
<dbReference type="eggNOG" id="COG1871">
    <property type="taxonomic scope" value="Bacteria"/>
</dbReference>
<dbReference type="HOGENOM" id="CLU_087854_0_0_6"/>
<dbReference type="OrthoDB" id="9807202at2"/>
<dbReference type="Proteomes" id="UP000000647">
    <property type="component" value="Chromosome"/>
</dbReference>
<dbReference type="GO" id="GO:0050568">
    <property type="term" value="F:protein-glutamine glutaminase activity"/>
    <property type="evidence" value="ECO:0007669"/>
    <property type="project" value="UniProtKB-UniRule"/>
</dbReference>
<dbReference type="GO" id="GO:0006935">
    <property type="term" value="P:chemotaxis"/>
    <property type="evidence" value="ECO:0007669"/>
    <property type="project" value="UniProtKB-UniRule"/>
</dbReference>
<dbReference type="CDD" id="cd16352">
    <property type="entry name" value="CheD"/>
    <property type="match status" value="1"/>
</dbReference>
<dbReference type="Gene3D" id="3.30.1330.200">
    <property type="match status" value="1"/>
</dbReference>
<dbReference type="HAMAP" id="MF_01440">
    <property type="entry name" value="CheD"/>
    <property type="match status" value="1"/>
</dbReference>
<dbReference type="InterPro" id="IPR038592">
    <property type="entry name" value="CheD-like_sf"/>
</dbReference>
<dbReference type="InterPro" id="IPR005659">
    <property type="entry name" value="Chemorcpt_Glu_NH3ase_CheD"/>
</dbReference>
<dbReference type="InterPro" id="IPR011324">
    <property type="entry name" value="Cytotoxic_necrot_fac-like_cat"/>
</dbReference>
<dbReference type="NCBIfam" id="NF010013">
    <property type="entry name" value="PRK13487.1"/>
    <property type="match status" value="1"/>
</dbReference>
<dbReference type="PANTHER" id="PTHR35147">
    <property type="entry name" value="CHEMORECEPTOR GLUTAMINE DEAMIDASE CHED-RELATED"/>
    <property type="match status" value="1"/>
</dbReference>
<dbReference type="PANTHER" id="PTHR35147:SF2">
    <property type="entry name" value="CHEMORECEPTOR GLUTAMINE DEAMIDASE CHED-RELATED"/>
    <property type="match status" value="1"/>
</dbReference>
<dbReference type="Pfam" id="PF03975">
    <property type="entry name" value="CheD"/>
    <property type="match status" value="1"/>
</dbReference>
<dbReference type="SUPFAM" id="SSF64438">
    <property type="entry name" value="CNF1/YfiH-like putative cysteine hydrolases"/>
    <property type="match status" value="1"/>
</dbReference>
<protein>
    <recommendedName>
        <fullName evidence="1">Probable chemoreceptor glutamine deamidase CheD</fullName>
        <ecNumber evidence="1">3.5.1.44</ecNumber>
    </recommendedName>
</protein>